<accession>B0KUE7</accession>
<reference key="1">
    <citation type="submission" date="2008-01" db="EMBL/GenBank/DDBJ databases">
        <title>Complete sequence of Pseudomonas putida GB-1.</title>
        <authorList>
            <consortium name="US DOE Joint Genome Institute"/>
            <person name="Copeland A."/>
            <person name="Lucas S."/>
            <person name="Lapidus A."/>
            <person name="Barry K."/>
            <person name="Glavina del Rio T."/>
            <person name="Dalin E."/>
            <person name="Tice H."/>
            <person name="Pitluck S."/>
            <person name="Bruce D."/>
            <person name="Goodwin L."/>
            <person name="Chertkov O."/>
            <person name="Brettin T."/>
            <person name="Detter J.C."/>
            <person name="Han C."/>
            <person name="Kuske C.R."/>
            <person name="Schmutz J."/>
            <person name="Larimer F."/>
            <person name="Land M."/>
            <person name="Hauser L."/>
            <person name="Kyrpides N."/>
            <person name="Kim E."/>
            <person name="McCarthy J.K."/>
            <person name="Richardson P."/>
        </authorList>
    </citation>
    <scope>NUCLEOTIDE SEQUENCE [LARGE SCALE GENOMIC DNA]</scope>
    <source>
        <strain>GB-1</strain>
    </source>
</reference>
<evidence type="ECO:0000255" key="1">
    <source>
        <dbReference type="HAMAP-Rule" id="MF_00005"/>
    </source>
</evidence>
<keyword id="KW-0028">Amino-acid biosynthesis</keyword>
<keyword id="KW-0055">Arginine biosynthesis</keyword>
<keyword id="KW-0067">ATP-binding</keyword>
<keyword id="KW-0963">Cytoplasm</keyword>
<keyword id="KW-0436">Ligase</keyword>
<keyword id="KW-0547">Nucleotide-binding</keyword>
<feature type="chain" id="PRO_1000073826" description="Argininosuccinate synthase">
    <location>
        <begin position="1"/>
        <end position="405"/>
    </location>
</feature>
<feature type="binding site" evidence="1">
    <location>
        <begin position="10"/>
        <end position="18"/>
    </location>
    <ligand>
        <name>ATP</name>
        <dbReference type="ChEBI" id="CHEBI:30616"/>
    </ligand>
</feature>
<feature type="binding site" evidence="1">
    <location>
        <position position="37"/>
    </location>
    <ligand>
        <name>ATP</name>
        <dbReference type="ChEBI" id="CHEBI:30616"/>
    </ligand>
</feature>
<feature type="binding site" evidence="1">
    <location>
        <position position="88"/>
    </location>
    <ligand>
        <name>L-citrulline</name>
        <dbReference type="ChEBI" id="CHEBI:57743"/>
    </ligand>
</feature>
<feature type="binding site" evidence="1">
    <location>
        <position position="93"/>
    </location>
    <ligand>
        <name>L-citrulline</name>
        <dbReference type="ChEBI" id="CHEBI:57743"/>
    </ligand>
</feature>
<feature type="binding site" evidence="1">
    <location>
        <position position="118"/>
    </location>
    <ligand>
        <name>ATP</name>
        <dbReference type="ChEBI" id="CHEBI:30616"/>
    </ligand>
</feature>
<feature type="binding site" evidence="1">
    <location>
        <position position="120"/>
    </location>
    <ligand>
        <name>L-aspartate</name>
        <dbReference type="ChEBI" id="CHEBI:29991"/>
    </ligand>
</feature>
<feature type="binding site" evidence="1">
    <location>
        <position position="124"/>
    </location>
    <ligand>
        <name>L-aspartate</name>
        <dbReference type="ChEBI" id="CHEBI:29991"/>
    </ligand>
</feature>
<feature type="binding site" evidence="1">
    <location>
        <position position="124"/>
    </location>
    <ligand>
        <name>L-citrulline</name>
        <dbReference type="ChEBI" id="CHEBI:57743"/>
    </ligand>
</feature>
<feature type="binding site" evidence="1">
    <location>
        <position position="125"/>
    </location>
    <ligand>
        <name>L-aspartate</name>
        <dbReference type="ChEBI" id="CHEBI:29991"/>
    </ligand>
</feature>
<feature type="binding site" evidence="1">
    <location>
        <position position="128"/>
    </location>
    <ligand>
        <name>L-citrulline</name>
        <dbReference type="ChEBI" id="CHEBI:57743"/>
    </ligand>
</feature>
<feature type="binding site" evidence="1">
    <location>
        <position position="179"/>
    </location>
    <ligand>
        <name>L-citrulline</name>
        <dbReference type="ChEBI" id="CHEBI:57743"/>
    </ligand>
</feature>
<feature type="binding site" evidence="1">
    <location>
        <position position="188"/>
    </location>
    <ligand>
        <name>L-citrulline</name>
        <dbReference type="ChEBI" id="CHEBI:57743"/>
    </ligand>
</feature>
<feature type="binding site" evidence="1">
    <location>
        <position position="264"/>
    </location>
    <ligand>
        <name>L-citrulline</name>
        <dbReference type="ChEBI" id="CHEBI:57743"/>
    </ligand>
</feature>
<feature type="binding site" evidence="1">
    <location>
        <position position="276"/>
    </location>
    <ligand>
        <name>L-citrulline</name>
        <dbReference type="ChEBI" id="CHEBI:57743"/>
    </ligand>
</feature>
<dbReference type="EC" id="6.3.4.5" evidence="1"/>
<dbReference type="EMBL" id="CP000926">
    <property type="protein sequence ID" value="ABZ00213.1"/>
    <property type="molecule type" value="Genomic_DNA"/>
</dbReference>
<dbReference type="RefSeq" id="WP_012273880.1">
    <property type="nucleotide sequence ID" value="NC_010322.1"/>
</dbReference>
<dbReference type="SMR" id="B0KUE7"/>
<dbReference type="KEGG" id="ppg:PputGB1_4324"/>
<dbReference type="eggNOG" id="COG0137">
    <property type="taxonomic scope" value="Bacteria"/>
</dbReference>
<dbReference type="HOGENOM" id="CLU_032784_4_2_6"/>
<dbReference type="UniPathway" id="UPA00068">
    <property type="reaction ID" value="UER00113"/>
</dbReference>
<dbReference type="Proteomes" id="UP000002157">
    <property type="component" value="Chromosome"/>
</dbReference>
<dbReference type="GO" id="GO:0005737">
    <property type="term" value="C:cytoplasm"/>
    <property type="evidence" value="ECO:0007669"/>
    <property type="project" value="UniProtKB-SubCell"/>
</dbReference>
<dbReference type="GO" id="GO:0004055">
    <property type="term" value="F:argininosuccinate synthase activity"/>
    <property type="evidence" value="ECO:0007669"/>
    <property type="project" value="UniProtKB-UniRule"/>
</dbReference>
<dbReference type="GO" id="GO:0005524">
    <property type="term" value="F:ATP binding"/>
    <property type="evidence" value="ECO:0007669"/>
    <property type="project" value="UniProtKB-UniRule"/>
</dbReference>
<dbReference type="GO" id="GO:0000053">
    <property type="term" value="P:argininosuccinate metabolic process"/>
    <property type="evidence" value="ECO:0007669"/>
    <property type="project" value="TreeGrafter"/>
</dbReference>
<dbReference type="GO" id="GO:0006526">
    <property type="term" value="P:L-arginine biosynthetic process"/>
    <property type="evidence" value="ECO:0007669"/>
    <property type="project" value="UniProtKB-UniRule"/>
</dbReference>
<dbReference type="GO" id="GO:0000050">
    <property type="term" value="P:urea cycle"/>
    <property type="evidence" value="ECO:0007669"/>
    <property type="project" value="TreeGrafter"/>
</dbReference>
<dbReference type="CDD" id="cd01999">
    <property type="entry name" value="ASS"/>
    <property type="match status" value="1"/>
</dbReference>
<dbReference type="FunFam" id="1.20.5.470:FF:000001">
    <property type="entry name" value="Argininosuccinate synthase"/>
    <property type="match status" value="1"/>
</dbReference>
<dbReference type="FunFam" id="3.40.50.620:FF:000019">
    <property type="entry name" value="Argininosuccinate synthase"/>
    <property type="match status" value="1"/>
</dbReference>
<dbReference type="FunFam" id="3.90.1260.10:FF:000001">
    <property type="entry name" value="Argininosuccinate synthase"/>
    <property type="match status" value="1"/>
</dbReference>
<dbReference type="Gene3D" id="3.90.1260.10">
    <property type="entry name" value="Argininosuccinate synthetase, chain A, domain 2"/>
    <property type="match status" value="1"/>
</dbReference>
<dbReference type="Gene3D" id="3.40.50.620">
    <property type="entry name" value="HUPs"/>
    <property type="match status" value="1"/>
</dbReference>
<dbReference type="Gene3D" id="1.20.5.470">
    <property type="entry name" value="Single helix bin"/>
    <property type="match status" value="1"/>
</dbReference>
<dbReference type="HAMAP" id="MF_00005">
    <property type="entry name" value="Arg_succ_synth_type1"/>
    <property type="match status" value="1"/>
</dbReference>
<dbReference type="InterPro" id="IPR048268">
    <property type="entry name" value="Arginosuc_syn_C"/>
</dbReference>
<dbReference type="InterPro" id="IPR048267">
    <property type="entry name" value="Arginosuc_syn_N"/>
</dbReference>
<dbReference type="InterPro" id="IPR001518">
    <property type="entry name" value="Arginosuc_synth"/>
</dbReference>
<dbReference type="InterPro" id="IPR018223">
    <property type="entry name" value="Arginosuc_synth_CS"/>
</dbReference>
<dbReference type="InterPro" id="IPR023434">
    <property type="entry name" value="Arginosuc_synth_type_1_subfam"/>
</dbReference>
<dbReference type="InterPro" id="IPR024074">
    <property type="entry name" value="AS_cat/multimer_dom_body"/>
</dbReference>
<dbReference type="InterPro" id="IPR014729">
    <property type="entry name" value="Rossmann-like_a/b/a_fold"/>
</dbReference>
<dbReference type="NCBIfam" id="TIGR00032">
    <property type="entry name" value="argG"/>
    <property type="match status" value="1"/>
</dbReference>
<dbReference type="NCBIfam" id="NF001770">
    <property type="entry name" value="PRK00509.1"/>
    <property type="match status" value="1"/>
</dbReference>
<dbReference type="PANTHER" id="PTHR11587">
    <property type="entry name" value="ARGININOSUCCINATE SYNTHASE"/>
    <property type="match status" value="1"/>
</dbReference>
<dbReference type="PANTHER" id="PTHR11587:SF2">
    <property type="entry name" value="ARGININOSUCCINATE SYNTHASE"/>
    <property type="match status" value="1"/>
</dbReference>
<dbReference type="Pfam" id="PF20979">
    <property type="entry name" value="Arginosuc_syn_C"/>
    <property type="match status" value="1"/>
</dbReference>
<dbReference type="Pfam" id="PF00764">
    <property type="entry name" value="Arginosuc_synth"/>
    <property type="match status" value="1"/>
</dbReference>
<dbReference type="SUPFAM" id="SSF52402">
    <property type="entry name" value="Adenine nucleotide alpha hydrolases-like"/>
    <property type="match status" value="1"/>
</dbReference>
<dbReference type="SUPFAM" id="SSF69864">
    <property type="entry name" value="Argininosuccinate synthetase, C-terminal domain"/>
    <property type="match status" value="1"/>
</dbReference>
<dbReference type="PROSITE" id="PS00564">
    <property type="entry name" value="ARGININOSUCCIN_SYN_1"/>
    <property type="match status" value="1"/>
</dbReference>
<dbReference type="PROSITE" id="PS00565">
    <property type="entry name" value="ARGININOSUCCIN_SYN_2"/>
    <property type="match status" value="1"/>
</dbReference>
<gene>
    <name evidence="1" type="primary">argG</name>
    <name type="ordered locus">PputGB1_4324</name>
</gene>
<comment type="catalytic activity">
    <reaction evidence="1">
        <text>L-citrulline + L-aspartate + ATP = 2-(N(omega)-L-arginino)succinate + AMP + diphosphate + H(+)</text>
        <dbReference type="Rhea" id="RHEA:10932"/>
        <dbReference type="ChEBI" id="CHEBI:15378"/>
        <dbReference type="ChEBI" id="CHEBI:29991"/>
        <dbReference type="ChEBI" id="CHEBI:30616"/>
        <dbReference type="ChEBI" id="CHEBI:33019"/>
        <dbReference type="ChEBI" id="CHEBI:57472"/>
        <dbReference type="ChEBI" id="CHEBI:57743"/>
        <dbReference type="ChEBI" id="CHEBI:456215"/>
        <dbReference type="EC" id="6.3.4.5"/>
    </reaction>
</comment>
<comment type="pathway">
    <text evidence="1">Amino-acid biosynthesis; L-arginine biosynthesis; L-arginine from L-ornithine and carbamoyl phosphate: step 2/3.</text>
</comment>
<comment type="subunit">
    <text evidence="1">Homotetramer.</text>
</comment>
<comment type="subcellular location">
    <subcellularLocation>
        <location evidence="1">Cytoplasm</location>
    </subcellularLocation>
</comment>
<comment type="similarity">
    <text evidence="1">Belongs to the argininosuccinate synthase family. Type 1 subfamily.</text>
</comment>
<name>ASSY_PSEPG</name>
<sequence length="405" mass="45119">MADVKKVVLAYSGGLDTSVILKWLQDTYNCEVVTFTADLGQGEEVEPARAKAQAMGVKEIYIDDLREEFVRDFVFPMFRANTVYEGEYLLGTSIARPLIAKRLIEIANATGADAISHGATGKGNDQVRFELGAYALKPGVKVIAPWREWDLLSREKLMDYAEKHGIPIERHGKKKSPYSMDANLLHISYEGGVLEDTWTEHEEEMWRWSVSPENAPDQATYIELTYRNGDIVAINGVEKSPATVLADLNRIGGANGIGRLDIVENRYVGMKSRGCYETPGGTIMLKAHRAIESITLDREVAHLKDELMPKYASLIYTGYWWSPERLMLQQMIDASQVNVNGVVRLKLYKGNVTVVGRKSDDSLFDANIATFEEDGGAYNQADAAGFIKLNALRMRIAANKGRSLL</sequence>
<proteinExistence type="inferred from homology"/>
<protein>
    <recommendedName>
        <fullName evidence="1">Argininosuccinate synthase</fullName>
        <ecNumber evidence="1">6.3.4.5</ecNumber>
    </recommendedName>
    <alternativeName>
        <fullName evidence="1">Citrulline--aspartate ligase</fullName>
    </alternativeName>
</protein>
<organism>
    <name type="scientific">Pseudomonas putida (strain GB-1)</name>
    <dbReference type="NCBI Taxonomy" id="76869"/>
    <lineage>
        <taxon>Bacteria</taxon>
        <taxon>Pseudomonadati</taxon>
        <taxon>Pseudomonadota</taxon>
        <taxon>Gammaproteobacteria</taxon>
        <taxon>Pseudomonadales</taxon>
        <taxon>Pseudomonadaceae</taxon>
        <taxon>Pseudomonas</taxon>
    </lineage>
</organism>